<accession>B5YXB2</accession>
<organism>
    <name type="scientific">Escherichia coli O157:H7 (strain EC4115 / EHEC)</name>
    <dbReference type="NCBI Taxonomy" id="444450"/>
    <lineage>
        <taxon>Bacteria</taxon>
        <taxon>Pseudomonadati</taxon>
        <taxon>Pseudomonadota</taxon>
        <taxon>Gammaproteobacteria</taxon>
        <taxon>Enterobacterales</taxon>
        <taxon>Enterobacteriaceae</taxon>
        <taxon>Escherichia</taxon>
    </lineage>
</organism>
<evidence type="ECO:0000255" key="1">
    <source>
        <dbReference type="HAMAP-Rule" id="MF_00544"/>
    </source>
</evidence>
<comment type="catalytic activity">
    <reaction evidence="1">
        <text>L-tryptophan + H2O = indole + pyruvate + NH4(+)</text>
        <dbReference type="Rhea" id="RHEA:19553"/>
        <dbReference type="ChEBI" id="CHEBI:15361"/>
        <dbReference type="ChEBI" id="CHEBI:15377"/>
        <dbReference type="ChEBI" id="CHEBI:16881"/>
        <dbReference type="ChEBI" id="CHEBI:28938"/>
        <dbReference type="ChEBI" id="CHEBI:57912"/>
        <dbReference type="EC" id="4.1.99.1"/>
    </reaction>
</comment>
<comment type="cofactor">
    <cofactor evidence="1">
        <name>pyridoxal 5'-phosphate</name>
        <dbReference type="ChEBI" id="CHEBI:597326"/>
    </cofactor>
</comment>
<comment type="pathway">
    <text evidence="1">Amino-acid degradation; L-tryptophan degradation via pyruvate pathway; indole and pyruvate from L-tryptophan: step 1/1.</text>
</comment>
<comment type="subunit">
    <text evidence="1">Homotetramer.</text>
</comment>
<comment type="similarity">
    <text evidence="1">Belongs to the beta-eliminating lyase family.</text>
</comment>
<reference key="1">
    <citation type="journal article" date="2011" name="Proc. Natl. Acad. Sci. U.S.A.">
        <title>Genomic anatomy of Escherichia coli O157:H7 outbreaks.</title>
        <authorList>
            <person name="Eppinger M."/>
            <person name="Mammel M.K."/>
            <person name="Leclerc J.E."/>
            <person name="Ravel J."/>
            <person name="Cebula T.A."/>
        </authorList>
    </citation>
    <scope>NUCLEOTIDE SEQUENCE [LARGE SCALE GENOMIC DNA]</scope>
    <source>
        <strain>EC4115 / EHEC</strain>
    </source>
</reference>
<gene>
    <name evidence="1" type="primary">tnaA</name>
    <name type="ordered locus">ECH74115_5139</name>
</gene>
<dbReference type="EC" id="4.1.99.1" evidence="1"/>
<dbReference type="EMBL" id="CP001164">
    <property type="protein sequence ID" value="ACI36347.1"/>
    <property type="molecule type" value="Genomic_DNA"/>
</dbReference>
<dbReference type="RefSeq" id="WP_001302010.1">
    <property type="nucleotide sequence ID" value="NC_011353.1"/>
</dbReference>
<dbReference type="SMR" id="B5YXB2"/>
<dbReference type="KEGG" id="ecf:ECH74115_5139"/>
<dbReference type="HOGENOM" id="CLU_047223_0_0_6"/>
<dbReference type="UniPathway" id="UPA00332">
    <property type="reaction ID" value="UER00452"/>
</dbReference>
<dbReference type="GO" id="GO:0009034">
    <property type="term" value="F:tryptophanase activity"/>
    <property type="evidence" value="ECO:0007669"/>
    <property type="project" value="UniProtKB-UniRule"/>
</dbReference>
<dbReference type="FunFam" id="3.40.640.10:FF:000039">
    <property type="entry name" value="Tryptophanase"/>
    <property type="match status" value="1"/>
</dbReference>
<dbReference type="Gene3D" id="3.90.1150.10">
    <property type="entry name" value="Aspartate Aminotransferase, domain 1"/>
    <property type="match status" value="1"/>
</dbReference>
<dbReference type="Gene3D" id="3.40.640.10">
    <property type="entry name" value="Type I PLP-dependent aspartate aminotransferase-like (Major domain)"/>
    <property type="match status" value="1"/>
</dbReference>
<dbReference type="HAMAP" id="MF_00544">
    <property type="entry name" value="Tryptophanase"/>
    <property type="match status" value="1"/>
</dbReference>
<dbReference type="InterPro" id="IPR001597">
    <property type="entry name" value="ArAA_b-elim_lyase/Thr_aldolase"/>
</dbReference>
<dbReference type="InterPro" id="IPR011166">
    <property type="entry name" value="Beta-eliminating_lyase"/>
</dbReference>
<dbReference type="InterPro" id="IPR015424">
    <property type="entry name" value="PyrdxlP-dep_Trfase"/>
</dbReference>
<dbReference type="InterPro" id="IPR015421">
    <property type="entry name" value="PyrdxlP-dep_Trfase_major"/>
</dbReference>
<dbReference type="InterPro" id="IPR015422">
    <property type="entry name" value="PyrdxlP-dep_Trfase_small"/>
</dbReference>
<dbReference type="InterPro" id="IPR013440">
    <property type="entry name" value="TNase"/>
</dbReference>
<dbReference type="InterPro" id="IPR018176">
    <property type="entry name" value="Tryptophanase_CS"/>
</dbReference>
<dbReference type="NCBIfam" id="NF009709">
    <property type="entry name" value="PRK13238.1"/>
    <property type="match status" value="1"/>
</dbReference>
<dbReference type="NCBIfam" id="TIGR02617">
    <property type="entry name" value="tnaA_trp_ase"/>
    <property type="match status" value="1"/>
</dbReference>
<dbReference type="PANTHER" id="PTHR32325">
    <property type="entry name" value="BETA-ELIMINATING LYASE-LIKE PROTEIN-RELATED"/>
    <property type="match status" value="1"/>
</dbReference>
<dbReference type="PANTHER" id="PTHR32325:SF4">
    <property type="entry name" value="TRYPTOPHANASE"/>
    <property type="match status" value="1"/>
</dbReference>
<dbReference type="Pfam" id="PF01212">
    <property type="entry name" value="Beta_elim_lyase"/>
    <property type="match status" value="1"/>
</dbReference>
<dbReference type="PIRSF" id="PIRSF001386">
    <property type="entry name" value="Trpase"/>
    <property type="match status" value="1"/>
</dbReference>
<dbReference type="SUPFAM" id="SSF53383">
    <property type="entry name" value="PLP-dependent transferases"/>
    <property type="match status" value="1"/>
</dbReference>
<dbReference type="PROSITE" id="PS00853">
    <property type="entry name" value="BETA_ELIM_LYASE"/>
    <property type="match status" value="1"/>
</dbReference>
<protein>
    <recommendedName>
        <fullName evidence="1">Tryptophanase</fullName>
        <ecNumber evidence="1">4.1.99.1</ecNumber>
    </recommendedName>
    <alternativeName>
        <fullName evidence="1">L-tryptophan indole-lyase</fullName>
        <shortName evidence="1">TNase</shortName>
    </alternativeName>
</protein>
<sequence length="471" mass="52789">MENFKHLPEPFRIRVIEPVKRTTRAYREEAIIKSGMNPFLLDSEDVFIDLLTDSGTGAVTQSMQAAMMRGDEAYSGSRSYYALAESVKNIFGYQYTIPTHQGRGAEQIYIPVLIKKREQEKGLDRSKMVAFSNYFFDTTQGHSQINGCTVRNVYIKEAFDTGVRYDFKGNFDLEGLERGIEEVGPNNVPYIVATITSNSAGGQPVSLANLKAMYSIAKKYDIPVVMDSARFAENAYFIKQREAEYKDWTIEQITRETYKYADMLAMSAKKDAMVPMGGLLCMKDDSFFDVYTECRTLCVVQEGFPTYGGLEGGAMERLAVGLYDGMNLDWLAYRIAQVQYLVDGLEEIGVVCQQAGGHAAFVDAGKLLPHIPADQFPAQALACELYKVAGIRAVEIGSFLLGRDPKTGKQLPCPAELLRLTIPRATYTQTHMDFIIEAFKHVKENASNIKGLTFTYEPKVLRHFTAKLKEV</sequence>
<name>TNAA_ECO5E</name>
<keyword id="KW-0007">Acetylation</keyword>
<keyword id="KW-0456">Lyase</keyword>
<keyword id="KW-0663">Pyridoxal phosphate</keyword>
<keyword id="KW-0823">Tryptophan catabolism</keyword>
<proteinExistence type="inferred from homology"/>
<feature type="chain" id="PRO_1000128907" description="Tryptophanase">
    <location>
        <begin position="1"/>
        <end position="471"/>
    </location>
</feature>
<feature type="modified residue" description="N6-acetyllysine" evidence="1">
    <location>
        <position position="5"/>
    </location>
</feature>
<feature type="modified residue" description="N6-acetyllysine" evidence="1">
    <location>
        <position position="115"/>
    </location>
</feature>
<feature type="modified residue" description="N6-acetyllysine" evidence="1">
    <location>
        <position position="156"/>
    </location>
</feature>
<feature type="modified residue" description="N6-(pyridoxal phosphate)lysine" evidence="1">
    <location>
        <position position="270"/>
    </location>
</feature>
<feature type="modified residue" description="N6-acetyllysine" evidence="1">
    <location>
        <position position="450"/>
    </location>
</feature>